<feature type="initiator methionine" description="Removed" evidence="1">
    <location>
        <position position="1"/>
    </location>
</feature>
<feature type="chain" id="PRO_0000209559" description="Probable tautomerase str1128">
    <location>
        <begin position="2"/>
        <end position="61"/>
    </location>
</feature>
<feature type="active site" description="Proton acceptor; via imino nitrogen" evidence="1">
    <location>
        <position position="2"/>
    </location>
</feature>
<accession>Q5LZM1</accession>
<organism>
    <name type="scientific">Streptococcus thermophilus (strain CNRZ 1066)</name>
    <dbReference type="NCBI Taxonomy" id="299768"/>
    <lineage>
        <taxon>Bacteria</taxon>
        <taxon>Bacillati</taxon>
        <taxon>Bacillota</taxon>
        <taxon>Bacilli</taxon>
        <taxon>Lactobacillales</taxon>
        <taxon>Streptococcaceae</taxon>
        <taxon>Streptococcus</taxon>
    </lineage>
</organism>
<sequence length="61" mass="7062">MPFVKIDLFEGRSEEQKIELAREVTEVVSRVAKAPKEAIHVFINDMPEGTYYPHGEMKKKN</sequence>
<evidence type="ECO:0000250" key="1"/>
<evidence type="ECO:0000305" key="2"/>
<gene>
    <name type="ordered locus">str1128</name>
</gene>
<dbReference type="EC" id="5.3.2.-"/>
<dbReference type="EMBL" id="CP000024">
    <property type="protein sequence ID" value="AAV62676.1"/>
    <property type="molecule type" value="Genomic_DNA"/>
</dbReference>
<dbReference type="RefSeq" id="WP_002950885.1">
    <property type="nucleotide sequence ID" value="NC_006449.1"/>
</dbReference>
<dbReference type="SMR" id="Q5LZM1"/>
<dbReference type="KEGG" id="stc:str1128"/>
<dbReference type="HOGENOM" id="CLU_148073_5_1_9"/>
<dbReference type="GO" id="GO:0016853">
    <property type="term" value="F:isomerase activity"/>
    <property type="evidence" value="ECO:0007669"/>
    <property type="project" value="UniProtKB-KW"/>
</dbReference>
<dbReference type="Gene3D" id="3.30.429.10">
    <property type="entry name" value="Macrophage Migration Inhibitory Factor"/>
    <property type="match status" value="1"/>
</dbReference>
<dbReference type="InterPro" id="IPR004370">
    <property type="entry name" value="4-OT-like_dom"/>
</dbReference>
<dbReference type="InterPro" id="IPR014347">
    <property type="entry name" value="Tautomerase/MIF_sf"/>
</dbReference>
<dbReference type="NCBIfam" id="NF002571">
    <property type="entry name" value="PRK02220.1"/>
    <property type="match status" value="1"/>
</dbReference>
<dbReference type="NCBIfam" id="NF002622">
    <property type="entry name" value="PRK02289.1"/>
    <property type="match status" value="1"/>
</dbReference>
<dbReference type="PANTHER" id="PTHR35530:SF1">
    <property type="entry name" value="2-HYDROXYMUCONATE TAUTOMERASE"/>
    <property type="match status" value="1"/>
</dbReference>
<dbReference type="PANTHER" id="PTHR35530">
    <property type="entry name" value="TAUTOMERASE-RELATED"/>
    <property type="match status" value="1"/>
</dbReference>
<dbReference type="Pfam" id="PF01361">
    <property type="entry name" value="Tautomerase"/>
    <property type="match status" value="1"/>
</dbReference>
<dbReference type="SUPFAM" id="SSF55331">
    <property type="entry name" value="Tautomerase/MIF"/>
    <property type="match status" value="1"/>
</dbReference>
<reference key="1">
    <citation type="journal article" date="2004" name="Nat. Biotechnol.">
        <title>Complete sequence and comparative genome analysis of the dairy bacterium Streptococcus thermophilus.</title>
        <authorList>
            <person name="Bolotin A."/>
            <person name="Quinquis B."/>
            <person name="Renault P."/>
            <person name="Sorokin A."/>
            <person name="Ehrlich S.D."/>
            <person name="Kulakauskas S."/>
            <person name="Lapidus A."/>
            <person name="Goltsman E."/>
            <person name="Mazur M."/>
            <person name="Pusch G.D."/>
            <person name="Fonstein M."/>
            <person name="Overbeek R."/>
            <person name="Kyprides N."/>
            <person name="Purnelle B."/>
            <person name="Prozzi D."/>
            <person name="Ngui K."/>
            <person name="Masuy D."/>
            <person name="Hancy F."/>
            <person name="Burteau S."/>
            <person name="Boutry M."/>
            <person name="Delcour J."/>
            <person name="Goffeau A."/>
            <person name="Hols P."/>
        </authorList>
    </citation>
    <scope>NUCLEOTIDE SEQUENCE [LARGE SCALE GENOMIC DNA]</scope>
    <source>
        <strain>CNRZ 1066</strain>
    </source>
</reference>
<name>Y1128_STRT1</name>
<keyword id="KW-0413">Isomerase</keyword>
<protein>
    <recommendedName>
        <fullName>Probable tautomerase str1128</fullName>
        <ecNumber>5.3.2.-</ecNumber>
    </recommendedName>
</protein>
<comment type="similarity">
    <text evidence="2">Belongs to the 4-oxalocrotonate tautomerase family.</text>
</comment>
<proteinExistence type="inferred from homology"/>